<protein>
    <recommendedName>
        <fullName evidence="1">Aspartyl/glutamyl-tRNA(Asn/Gln) amidotransferase subunit B</fullName>
        <shortName evidence="1">Asp/Glu-ADT subunit B</shortName>
        <ecNumber evidence="1">6.3.5.-</ecNumber>
    </recommendedName>
</protein>
<accession>A2RHP6</accession>
<dbReference type="EC" id="6.3.5.-" evidence="1"/>
<dbReference type="EMBL" id="AM406671">
    <property type="protein sequence ID" value="CAL96783.1"/>
    <property type="molecule type" value="Genomic_DNA"/>
</dbReference>
<dbReference type="RefSeq" id="WP_011834266.1">
    <property type="nucleotide sequence ID" value="NC_009004.1"/>
</dbReference>
<dbReference type="SMR" id="A2RHP6"/>
<dbReference type="STRING" id="416870.llmg_0176"/>
<dbReference type="KEGG" id="llm:llmg_0176"/>
<dbReference type="eggNOG" id="COG0064">
    <property type="taxonomic scope" value="Bacteria"/>
</dbReference>
<dbReference type="HOGENOM" id="CLU_019240_0_0_9"/>
<dbReference type="OrthoDB" id="9804078at2"/>
<dbReference type="PhylomeDB" id="A2RHP6"/>
<dbReference type="Proteomes" id="UP000000364">
    <property type="component" value="Chromosome"/>
</dbReference>
<dbReference type="GO" id="GO:0050566">
    <property type="term" value="F:asparaginyl-tRNA synthase (glutamine-hydrolyzing) activity"/>
    <property type="evidence" value="ECO:0007669"/>
    <property type="project" value="RHEA"/>
</dbReference>
<dbReference type="GO" id="GO:0005524">
    <property type="term" value="F:ATP binding"/>
    <property type="evidence" value="ECO:0007669"/>
    <property type="project" value="UniProtKB-KW"/>
</dbReference>
<dbReference type="GO" id="GO:0050567">
    <property type="term" value="F:glutaminyl-tRNA synthase (glutamine-hydrolyzing) activity"/>
    <property type="evidence" value="ECO:0007669"/>
    <property type="project" value="UniProtKB-UniRule"/>
</dbReference>
<dbReference type="GO" id="GO:0070681">
    <property type="term" value="P:glutaminyl-tRNAGln biosynthesis via transamidation"/>
    <property type="evidence" value="ECO:0007669"/>
    <property type="project" value="TreeGrafter"/>
</dbReference>
<dbReference type="GO" id="GO:0006412">
    <property type="term" value="P:translation"/>
    <property type="evidence" value="ECO:0007669"/>
    <property type="project" value="UniProtKB-UniRule"/>
</dbReference>
<dbReference type="FunFam" id="1.10.10.410:FF:000001">
    <property type="entry name" value="Aspartyl/glutamyl-tRNA(Asn/Gln) amidotransferase subunit B"/>
    <property type="match status" value="1"/>
</dbReference>
<dbReference type="Gene3D" id="1.10.10.410">
    <property type="match status" value="1"/>
</dbReference>
<dbReference type="Gene3D" id="1.10.150.380">
    <property type="entry name" value="GatB domain, N-terminal subdomain"/>
    <property type="match status" value="1"/>
</dbReference>
<dbReference type="HAMAP" id="MF_00121">
    <property type="entry name" value="GatB"/>
    <property type="match status" value="1"/>
</dbReference>
<dbReference type="InterPro" id="IPR017959">
    <property type="entry name" value="Asn/Gln-tRNA_amidoTrfase_suB/E"/>
</dbReference>
<dbReference type="InterPro" id="IPR006075">
    <property type="entry name" value="Asn/Gln-tRNA_Trfase_suB/E_cat"/>
</dbReference>
<dbReference type="InterPro" id="IPR018027">
    <property type="entry name" value="Asn/Gln_amidotransferase"/>
</dbReference>
<dbReference type="InterPro" id="IPR003789">
    <property type="entry name" value="Asn/Gln_tRNA_amidoTrase-B-like"/>
</dbReference>
<dbReference type="InterPro" id="IPR004413">
    <property type="entry name" value="GatB"/>
</dbReference>
<dbReference type="InterPro" id="IPR042114">
    <property type="entry name" value="GatB_C_1"/>
</dbReference>
<dbReference type="InterPro" id="IPR023168">
    <property type="entry name" value="GatB_Yqey_C_2"/>
</dbReference>
<dbReference type="InterPro" id="IPR017958">
    <property type="entry name" value="Gln-tRNA_amidoTrfase_suB_CS"/>
</dbReference>
<dbReference type="InterPro" id="IPR014746">
    <property type="entry name" value="Gln_synth/guanido_kin_cat_dom"/>
</dbReference>
<dbReference type="NCBIfam" id="TIGR00133">
    <property type="entry name" value="gatB"/>
    <property type="match status" value="1"/>
</dbReference>
<dbReference type="NCBIfam" id="NF004011">
    <property type="entry name" value="PRK05477.1-1"/>
    <property type="match status" value="1"/>
</dbReference>
<dbReference type="NCBIfam" id="NF004012">
    <property type="entry name" value="PRK05477.1-2"/>
    <property type="match status" value="1"/>
</dbReference>
<dbReference type="NCBIfam" id="NF004014">
    <property type="entry name" value="PRK05477.1-4"/>
    <property type="match status" value="1"/>
</dbReference>
<dbReference type="PANTHER" id="PTHR11659">
    <property type="entry name" value="GLUTAMYL-TRNA GLN AMIDOTRANSFERASE SUBUNIT B MITOCHONDRIAL AND PROKARYOTIC PET112-RELATED"/>
    <property type="match status" value="1"/>
</dbReference>
<dbReference type="PANTHER" id="PTHR11659:SF0">
    <property type="entry name" value="GLUTAMYL-TRNA(GLN) AMIDOTRANSFERASE SUBUNIT B, MITOCHONDRIAL"/>
    <property type="match status" value="1"/>
</dbReference>
<dbReference type="Pfam" id="PF02934">
    <property type="entry name" value="GatB_N"/>
    <property type="match status" value="1"/>
</dbReference>
<dbReference type="Pfam" id="PF02637">
    <property type="entry name" value="GatB_Yqey"/>
    <property type="match status" value="1"/>
</dbReference>
<dbReference type="SMART" id="SM00845">
    <property type="entry name" value="GatB_Yqey"/>
    <property type="match status" value="1"/>
</dbReference>
<dbReference type="SUPFAM" id="SSF89095">
    <property type="entry name" value="GatB/YqeY motif"/>
    <property type="match status" value="1"/>
</dbReference>
<dbReference type="SUPFAM" id="SSF55931">
    <property type="entry name" value="Glutamine synthetase/guanido kinase"/>
    <property type="match status" value="1"/>
</dbReference>
<dbReference type="PROSITE" id="PS01234">
    <property type="entry name" value="GATB"/>
    <property type="match status" value="1"/>
</dbReference>
<feature type="chain" id="PRO_1000015981" description="Aspartyl/glutamyl-tRNA(Asn/Gln) amidotransferase subunit B">
    <location>
        <begin position="1"/>
        <end position="477"/>
    </location>
</feature>
<proteinExistence type="inferred from homology"/>
<sequence length="477" mass="53340">MNFETVIGLEVHVELSTNSKIFSPASTKFGGDPNSNTNVIDWSLPGVLPVMNKGVIDSGIKAALALNMDIHKSMHFDRKNYFYPDNPKAYQISQFDEPIGYNGSIEIELEDGHKATIRIERAHLEEDAGKNTHGTDGYSYVDLNRQGVPLIEIVSEADMRTPEEAYAYLTALKEAILYTGISDVKMEEGSMRCDANVSLRPYGQEAFGVKTEVKNMNSFSNVKKALDFEVARQAKILRAGGEIRQETRRFNDKTGETILMRVKEGASDYRYFPEPDVPRFEISDEWIEQMRASLPMTATARRAHYINDLGLSDYDARQLTATKEVSDFFDQAIKFDTDPKLVSNWLQGEVAQYLNSEKKELHEIGLTPENLTEMIRLISDGTISSKIAKKVFIELAKNGGSAEEFVKKAGLVQISDPDLLLPIIHEVFAKNEQSVADYRGGKQNAAKALVGQLMKATKGQANPTVAQKLLYQELDNF</sequence>
<keyword id="KW-0067">ATP-binding</keyword>
<keyword id="KW-0436">Ligase</keyword>
<keyword id="KW-0547">Nucleotide-binding</keyword>
<keyword id="KW-0648">Protein biosynthesis</keyword>
<evidence type="ECO:0000255" key="1">
    <source>
        <dbReference type="HAMAP-Rule" id="MF_00121"/>
    </source>
</evidence>
<name>GATB_LACLM</name>
<comment type="function">
    <text evidence="1">Allows the formation of correctly charged Asn-tRNA(Asn) or Gln-tRNA(Gln) through the transamidation of misacylated Asp-tRNA(Asn) or Glu-tRNA(Gln) in organisms which lack either or both of asparaginyl-tRNA or glutaminyl-tRNA synthetases. The reaction takes place in the presence of glutamine and ATP through an activated phospho-Asp-tRNA(Asn) or phospho-Glu-tRNA(Gln).</text>
</comment>
<comment type="catalytic activity">
    <reaction evidence="1">
        <text>L-glutamyl-tRNA(Gln) + L-glutamine + ATP + H2O = L-glutaminyl-tRNA(Gln) + L-glutamate + ADP + phosphate + H(+)</text>
        <dbReference type="Rhea" id="RHEA:17521"/>
        <dbReference type="Rhea" id="RHEA-COMP:9681"/>
        <dbReference type="Rhea" id="RHEA-COMP:9684"/>
        <dbReference type="ChEBI" id="CHEBI:15377"/>
        <dbReference type="ChEBI" id="CHEBI:15378"/>
        <dbReference type="ChEBI" id="CHEBI:29985"/>
        <dbReference type="ChEBI" id="CHEBI:30616"/>
        <dbReference type="ChEBI" id="CHEBI:43474"/>
        <dbReference type="ChEBI" id="CHEBI:58359"/>
        <dbReference type="ChEBI" id="CHEBI:78520"/>
        <dbReference type="ChEBI" id="CHEBI:78521"/>
        <dbReference type="ChEBI" id="CHEBI:456216"/>
    </reaction>
</comment>
<comment type="catalytic activity">
    <reaction evidence="1">
        <text>L-aspartyl-tRNA(Asn) + L-glutamine + ATP + H2O = L-asparaginyl-tRNA(Asn) + L-glutamate + ADP + phosphate + 2 H(+)</text>
        <dbReference type="Rhea" id="RHEA:14513"/>
        <dbReference type="Rhea" id="RHEA-COMP:9674"/>
        <dbReference type="Rhea" id="RHEA-COMP:9677"/>
        <dbReference type="ChEBI" id="CHEBI:15377"/>
        <dbReference type="ChEBI" id="CHEBI:15378"/>
        <dbReference type="ChEBI" id="CHEBI:29985"/>
        <dbReference type="ChEBI" id="CHEBI:30616"/>
        <dbReference type="ChEBI" id="CHEBI:43474"/>
        <dbReference type="ChEBI" id="CHEBI:58359"/>
        <dbReference type="ChEBI" id="CHEBI:78515"/>
        <dbReference type="ChEBI" id="CHEBI:78516"/>
        <dbReference type="ChEBI" id="CHEBI:456216"/>
    </reaction>
</comment>
<comment type="subunit">
    <text evidence="1">Heterotrimer of A, B and C subunits.</text>
</comment>
<comment type="similarity">
    <text evidence="1">Belongs to the GatB/GatE family. GatB subfamily.</text>
</comment>
<reference key="1">
    <citation type="journal article" date="2007" name="J. Bacteriol.">
        <title>The complete genome sequence of the lactic acid bacterial paradigm Lactococcus lactis subsp. cremoris MG1363.</title>
        <authorList>
            <person name="Wegmann U."/>
            <person name="O'Connell-Motherway M."/>
            <person name="Zomer A."/>
            <person name="Buist G."/>
            <person name="Shearman C."/>
            <person name="Canchaya C."/>
            <person name="Ventura M."/>
            <person name="Goesmann A."/>
            <person name="Gasson M.J."/>
            <person name="Kuipers O.P."/>
            <person name="van Sinderen D."/>
            <person name="Kok J."/>
        </authorList>
    </citation>
    <scope>NUCLEOTIDE SEQUENCE [LARGE SCALE GENOMIC DNA]</scope>
    <source>
        <strain>MG1363</strain>
    </source>
</reference>
<organism>
    <name type="scientific">Lactococcus lactis subsp. cremoris (strain MG1363)</name>
    <dbReference type="NCBI Taxonomy" id="416870"/>
    <lineage>
        <taxon>Bacteria</taxon>
        <taxon>Bacillati</taxon>
        <taxon>Bacillota</taxon>
        <taxon>Bacilli</taxon>
        <taxon>Lactobacillales</taxon>
        <taxon>Streptococcaceae</taxon>
        <taxon>Lactococcus</taxon>
        <taxon>Lactococcus cremoris subsp. cremoris</taxon>
    </lineage>
</organism>
<gene>
    <name evidence="1" type="primary">gatB</name>
    <name type="ordered locus">llmg_0176</name>
</gene>